<dbReference type="EC" id="3.5.4.19" evidence="1"/>
<dbReference type="EMBL" id="AE000516">
    <property type="protein sequence ID" value="AAK45910.1"/>
    <property type="molecule type" value="Genomic_DNA"/>
</dbReference>
<dbReference type="PIR" id="E70819">
    <property type="entry name" value="E70819"/>
</dbReference>
<dbReference type="RefSeq" id="WP_003407963.1">
    <property type="nucleotide sequence ID" value="NZ_KK341227.1"/>
</dbReference>
<dbReference type="SMR" id="P9WMM6"/>
<dbReference type="GeneID" id="45425574"/>
<dbReference type="KEGG" id="mtc:MT1641.1"/>
<dbReference type="PATRIC" id="fig|83331.31.peg.1764"/>
<dbReference type="HOGENOM" id="CLU_048577_5_1_11"/>
<dbReference type="UniPathway" id="UPA00031">
    <property type="reaction ID" value="UER00008"/>
</dbReference>
<dbReference type="Proteomes" id="UP000001020">
    <property type="component" value="Chromosome"/>
</dbReference>
<dbReference type="GO" id="GO:0005737">
    <property type="term" value="C:cytoplasm"/>
    <property type="evidence" value="ECO:0007669"/>
    <property type="project" value="UniProtKB-SubCell"/>
</dbReference>
<dbReference type="GO" id="GO:0000287">
    <property type="term" value="F:magnesium ion binding"/>
    <property type="evidence" value="ECO:0007669"/>
    <property type="project" value="UniProtKB-UniRule"/>
</dbReference>
<dbReference type="GO" id="GO:0004635">
    <property type="term" value="F:phosphoribosyl-AMP cyclohydrolase activity"/>
    <property type="evidence" value="ECO:0007669"/>
    <property type="project" value="UniProtKB-UniRule"/>
</dbReference>
<dbReference type="GO" id="GO:0008270">
    <property type="term" value="F:zinc ion binding"/>
    <property type="evidence" value="ECO:0007669"/>
    <property type="project" value="UniProtKB-UniRule"/>
</dbReference>
<dbReference type="GO" id="GO:0000105">
    <property type="term" value="P:L-histidine biosynthetic process"/>
    <property type="evidence" value="ECO:0007669"/>
    <property type="project" value="UniProtKB-UniRule"/>
</dbReference>
<dbReference type="FunFam" id="3.10.20.810:FF:000001">
    <property type="entry name" value="Histidine biosynthesis bifunctional protein HisIE"/>
    <property type="match status" value="1"/>
</dbReference>
<dbReference type="Gene3D" id="3.10.20.810">
    <property type="entry name" value="Phosphoribosyl-AMP cyclohydrolase"/>
    <property type="match status" value="1"/>
</dbReference>
<dbReference type="HAMAP" id="MF_01021">
    <property type="entry name" value="HisI"/>
    <property type="match status" value="1"/>
</dbReference>
<dbReference type="InterPro" id="IPR026660">
    <property type="entry name" value="PRA-CH"/>
</dbReference>
<dbReference type="InterPro" id="IPR002496">
    <property type="entry name" value="PRib_AMP_CycHydrolase_dom"/>
</dbReference>
<dbReference type="InterPro" id="IPR038019">
    <property type="entry name" value="PRib_AMP_CycHydrolase_sf"/>
</dbReference>
<dbReference type="NCBIfam" id="NF000768">
    <property type="entry name" value="PRK00051.1"/>
    <property type="match status" value="1"/>
</dbReference>
<dbReference type="PANTHER" id="PTHR42945">
    <property type="entry name" value="HISTIDINE BIOSYNTHESIS BIFUNCTIONAL PROTEIN"/>
    <property type="match status" value="1"/>
</dbReference>
<dbReference type="PANTHER" id="PTHR42945:SF11">
    <property type="entry name" value="PHOSPHORIBOSYL-AMP CYCLOHYDROLASE"/>
    <property type="match status" value="1"/>
</dbReference>
<dbReference type="Pfam" id="PF01502">
    <property type="entry name" value="PRA-CH"/>
    <property type="match status" value="1"/>
</dbReference>
<dbReference type="SUPFAM" id="SSF141734">
    <property type="entry name" value="HisI-like"/>
    <property type="match status" value="1"/>
</dbReference>
<proteinExistence type="inferred from homology"/>
<feature type="chain" id="PRO_0000427277" description="Phosphoribosyl-AMP cyclohydrolase">
    <location>
        <begin position="1"/>
        <end position="115"/>
    </location>
</feature>
<feature type="binding site" evidence="1">
    <location>
        <position position="80"/>
    </location>
    <ligand>
        <name>Mg(2+)</name>
        <dbReference type="ChEBI" id="CHEBI:18420"/>
    </ligand>
</feature>
<feature type="binding site" evidence="1">
    <location>
        <position position="81"/>
    </location>
    <ligand>
        <name>Zn(2+)</name>
        <dbReference type="ChEBI" id="CHEBI:29105"/>
        <note>ligand shared between dimeric partners</note>
    </ligand>
</feature>
<feature type="binding site" evidence="1">
    <location>
        <position position="82"/>
    </location>
    <ligand>
        <name>Mg(2+)</name>
        <dbReference type="ChEBI" id="CHEBI:18420"/>
    </ligand>
</feature>
<feature type="binding site" evidence="1">
    <location>
        <position position="84"/>
    </location>
    <ligand>
        <name>Mg(2+)</name>
        <dbReference type="ChEBI" id="CHEBI:18420"/>
    </ligand>
</feature>
<feature type="binding site" evidence="1">
    <location>
        <position position="97"/>
    </location>
    <ligand>
        <name>Zn(2+)</name>
        <dbReference type="ChEBI" id="CHEBI:29105"/>
        <note>ligand shared between dimeric partners</note>
    </ligand>
</feature>
<feature type="binding site" evidence="1">
    <location>
        <position position="104"/>
    </location>
    <ligand>
        <name>Zn(2+)</name>
        <dbReference type="ChEBI" id="CHEBI:29105"/>
        <note>ligand shared between dimeric partners</note>
    </ligand>
</feature>
<sequence>MTLDPKIAARLKRNADGLVTAVVQERGSGDVLMVAWMNDEALARTLQTREATYYSRSRAEQWVKGATSGHTQHVHSVRLDCDGDAVLLTVDQVGGACHTGDHSCFDAAVLLEPDD</sequence>
<comment type="function">
    <text evidence="1">Catalyzes the hydrolysis of the adenine ring of phosphoribosyl-AMP.</text>
</comment>
<comment type="catalytic activity">
    <reaction evidence="1">
        <text>1-(5-phospho-beta-D-ribosyl)-5'-AMP + H2O = 1-(5-phospho-beta-D-ribosyl)-5-[(5-phospho-beta-D-ribosylamino)methylideneamino]imidazole-4-carboxamide</text>
        <dbReference type="Rhea" id="RHEA:20049"/>
        <dbReference type="ChEBI" id="CHEBI:15377"/>
        <dbReference type="ChEBI" id="CHEBI:58435"/>
        <dbReference type="ChEBI" id="CHEBI:59457"/>
        <dbReference type="EC" id="3.5.4.19"/>
    </reaction>
</comment>
<comment type="cofactor">
    <cofactor evidence="1">
        <name>Mg(2+)</name>
        <dbReference type="ChEBI" id="CHEBI:18420"/>
    </cofactor>
    <text evidence="1">Binds 1 Mg(2+) ion per subunit.</text>
</comment>
<comment type="cofactor">
    <cofactor evidence="1">
        <name>Zn(2+)</name>
        <dbReference type="ChEBI" id="CHEBI:29105"/>
    </cofactor>
    <text evidence="1">Binds 1 zinc ion per subunit.</text>
</comment>
<comment type="pathway">
    <text evidence="1">Amino-acid biosynthesis; L-histidine biosynthesis; L-histidine from 5-phospho-alpha-D-ribose 1-diphosphate: step 3/9.</text>
</comment>
<comment type="subunit">
    <text evidence="1">Homodimer.</text>
</comment>
<comment type="subcellular location">
    <subcellularLocation>
        <location evidence="1">Cytoplasm</location>
    </subcellularLocation>
</comment>
<comment type="similarity">
    <text evidence="1">Belongs to the PRA-CH family.</text>
</comment>
<reference key="1">
    <citation type="journal article" date="2002" name="J. Bacteriol.">
        <title>Whole-genome comparison of Mycobacterium tuberculosis clinical and laboratory strains.</title>
        <authorList>
            <person name="Fleischmann R.D."/>
            <person name="Alland D."/>
            <person name="Eisen J.A."/>
            <person name="Carpenter L."/>
            <person name="White O."/>
            <person name="Peterson J.D."/>
            <person name="DeBoy R.T."/>
            <person name="Dodson R.J."/>
            <person name="Gwinn M.L."/>
            <person name="Haft D.H."/>
            <person name="Hickey E.K."/>
            <person name="Kolonay J.F."/>
            <person name="Nelson W.C."/>
            <person name="Umayam L.A."/>
            <person name="Ermolaeva M.D."/>
            <person name="Salzberg S.L."/>
            <person name="Delcher A."/>
            <person name="Utterback T.R."/>
            <person name="Weidman J.F."/>
            <person name="Khouri H.M."/>
            <person name="Gill J."/>
            <person name="Mikula A."/>
            <person name="Bishai W."/>
            <person name="Jacobs W.R. Jr."/>
            <person name="Venter J.C."/>
            <person name="Fraser C.M."/>
        </authorList>
    </citation>
    <scope>NUCLEOTIDE SEQUENCE [LARGE SCALE GENOMIC DNA]</scope>
    <source>
        <strain>CDC 1551 / Oshkosh</strain>
    </source>
</reference>
<evidence type="ECO:0000255" key="1">
    <source>
        <dbReference type="HAMAP-Rule" id="MF_01021"/>
    </source>
</evidence>
<organism>
    <name type="scientific">Mycobacterium tuberculosis (strain CDC 1551 / Oshkosh)</name>
    <dbReference type="NCBI Taxonomy" id="83331"/>
    <lineage>
        <taxon>Bacteria</taxon>
        <taxon>Bacillati</taxon>
        <taxon>Actinomycetota</taxon>
        <taxon>Actinomycetes</taxon>
        <taxon>Mycobacteriales</taxon>
        <taxon>Mycobacteriaceae</taxon>
        <taxon>Mycobacterium</taxon>
        <taxon>Mycobacterium tuberculosis complex</taxon>
    </lineage>
</organism>
<protein>
    <recommendedName>
        <fullName evidence="1">Phosphoribosyl-AMP cyclohydrolase</fullName>
        <shortName evidence="1">PRA-CH</shortName>
        <ecNumber evidence="1">3.5.4.19</ecNumber>
    </recommendedName>
</protein>
<gene>
    <name evidence="1" type="primary">hisI</name>
    <name type="ordered locus">MT1641.1</name>
</gene>
<accession>P9WMM6</accession>
<accession>L0T8S2</accession>
<accession>O53909</accession>
<accession>P0A5B3</accession>
<name>HIS3_MYCTO</name>
<keyword id="KW-0028">Amino-acid biosynthesis</keyword>
<keyword id="KW-0963">Cytoplasm</keyword>
<keyword id="KW-0368">Histidine biosynthesis</keyword>
<keyword id="KW-0378">Hydrolase</keyword>
<keyword id="KW-0460">Magnesium</keyword>
<keyword id="KW-0479">Metal-binding</keyword>
<keyword id="KW-1185">Reference proteome</keyword>
<keyword id="KW-0862">Zinc</keyword>